<proteinExistence type="inferred from homology"/>
<geneLocation type="chloroplast"/>
<gene>
    <name evidence="1" type="primary">rpl33</name>
</gene>
<dbReference type="EMBL" id="DQ347958">
    <property type="protein sequence ID" value="ABC56234.1"/>
    <property type="molecule type" value="Genomic_DNA"/>
</dbReference>
<dbReference type="RefSeq" id="YP_538869.1">
    <property type="nucleotide sequence ID" value="NC_007943.1"/>
</dbReference>
<dbReference type="GeneID" id="3989447"/>
<dbReference type="GO" id="GO:0009507">
    <property type="term" value="C:chloroplast"/>
    <property type="evidence" value="ECO:0007669"/>
    <property type="project" value="UniProtKB-SubCell"/>
</dbReference>
<dbReference type="GO" id="GO:1990904">
    <property type="term" value="C:ribonucleoprotein complex"/>
    <property type="evidence" value="ECO:0007669"/>
    <property type="project" value="UniProtKB-KW"/>
</dbReference>
<dbReference type="GO" id="GO:0005840">
    <property type="term" value="C:ribosome"/>
    <property type="evidence" value="ECO:0007669"/>
    <property type="project" value="UniProtKB-KW"/>
</dbReference>
<dbReference type="GO" id="GO:0003735">
    <property type="term" value="F:structural constituent of ribosome"/>
    <property type="evidence" value="ECO:0007669"/>
    <property type="project" value="InterPro"/>
</dbReference>
<dbReference type="GO" id="GO:0006412">
    <property type="term" value="P:translation"/>
    <property type="evidence" value="ECO:0007669"/>
    <property type="project" value="UniProtKB-UniRule"/>
</dbReference>
<dbReference type="Gene3D" id="2.20.28.120">
    <property type="entry name" value="Ribosomal protein L33"/>
    <property type="match status" value="1"/>
</dbReference>
<dbReference type="HAMAP" id="MF_00294">
    <property type="entry name" value="Ribosomal_bL33"/>
    <property type="match status" value="1"/>
</dbReference>
<dbReference type="InterPro" id="IPR001705">
    <property type="entry name" value="Ribosomal_bL33"/>
</dbReference>
<dbReference type="InterPro" id="IPR018264">
    <property type="entry name" value="Ribosomal_bL33_CS"/>
</dbReference>
<dbReference type="InterPro" id="IPR038584">
    <property type="entry name" value="Ribosomal_bL33_sf"/>
</dbReference>
<dbReference type="InterPro" id="IPR011332">
    <property type="entry name" value="Ribosomal_zn-bd"/>
</dbReference>
<dbReference type="NCBIfam" id="NF001764">
    <property type="entry name" value="PRK00504.1"/>
    <property type="match status" value="1"/>
</dbReference>
<dbReference type="NCBIfam" id="NF001860">
    <property type="entry name" value="PRK00595.1"/>
    <property type="match status" value="1"/>
</dbReference>
<dbReference type="NCBIfam" id="TIGR01023">
    <property type="entry name" value="rpmG_bact"/>
    <property type="match status" value="1"/>
</dbReference>
<dbReference type="PANTHER" id="PTHR43168">
    <property type="entry name" value="50S RIBOSOMAL PROTEIN L33, CHLOROPLASTIC"/>
    <property type="match status" value="1"/>
</dbReference>
<dbReference type="PANTHER" id="PTHR43168:SF2">
    <property type="entry name" value="LARGE RIBOSOMAL SUBUNIT PROTEIN BL33C"/>
    <property type="match status" value="1"/>
</dbReference>
<dbReference type="Pfam" id="PF00471">
    <property type="entry name" value="Ribosomal_L33"/>
    <property type="match status" value="1"/>
</dbReference>
<dbReference type="SUPFAM" id="SSF57829">
    <property type="entry name" value="Zn-binding ribosomal proteins"/>
    <property type="match status" value="1"/>
</dbReference>
<dbReference type="PROSITE" id="PS00582">
    <property type="entry name" value="RIBOSOMAL_L33"/>
    <property type="match status" value="1"/>
</dbReference>
<accession>Q2MIG6</accession>
<keyword id="KW-0150">Chloroplast</keyword>
<keyword id="KW-0934">Plastid</keyword>
<keyword id="KW-0687">Ribonucleoprotein</keyword>
<keyword id="KW-0689">Ribosomal protein</keyword>
<protein>
    <recommendedName>
        <fullName evidence="1">Large ribosomal subunit protein bL33c</fullName>
    </recommendedName>
    <alternativeName>
        <fullName evidence="2">50S ribosomal protein L33, chloroplastic</fullName>
    </alternativeName>
</protein>
<organism>
    <name type="scientific">Solanum bulbocastanum</name>
    <name type="common">Wild potato</name>
    <dbReference type="NCBI Taxonomy" id="147425"/>
    <lineage>
        <taxon>Eukaryota</taxon>
        <taxon>Viridiplantae</taxon>
        <taxon>Streptophyta</taxon>
        <taxon>Embryophyta</taxon>
        <taxon>Tracheophyta</taxon>
        <taxon>Spermatophyta</taxon>
        <taxon>Magnoliopsida</taxon>
        <taxon>eudicotyledons</taxon>
        <taxon>Gunneridae</taxon>
        <taxon>Pentapetalae</taxon>
        <taxon>asterids</taxon>
        <taxon>lamiids</taxon>
        <taxon>Solanales</taxon>
        <taxon>Solanaceae</taxon>
        <taxon>Solanoideae</taxon>
        <taxon>Solaneae</taxon>
        <taxon>Solanum</taxon>
    </lineage>
</organism>
<name>RK33_SOLBU</name>
<evidence type="ECO:0000255" key="1">
    <source>
        <dbReference type="HAMAP-Rule" id="MF_00294"/>
    </source>
</evidence>
<evidence type="ECO:0000305" key="2"/>
<sequence length="66" mass="7727">MAKGKDVRVTVILECTSCVRNSVDKVSRGISRYITQKNRHNTPNRFELKKFCPYCYKHTIHGEIKK</sequence>
<feature type="chain" id="PRO_0000276516" description="Large ribosomal subunit protein bL33c">
    <location>
        <begin position="1"/>
        <end position="66"/>
    </location>
</feature>
<reference key="1">
    <citation type="journal article" date="2006" name="Theor. Appl. Genet.">
        <title>Complete chloroplast genome sequences of Solanum bulbocastanum, Solanum lycopersicum and comparative analyses with other Solanaceae genomes.</title>
        <authorList>
            <person name="Daniell H."/>
            <person name="Lee S.-B."/>
            <person name="Grevich J."/>
            <person name="Saski C."/>
            <person name="Quesada-Vargas T."/>
            <person name="Guda C."/>
            <person name="Tomkins J."/>
            <person name="Jansen R.K."/>
        </authorList>
    </citation>
    <scope>NUCLEOTIDE SEQUENCE [LARGE SCALE GENOMIC DNA]</scope>
    <source>
        <strain>cv. PT29</strain>
    </source>
</reference>
<comment type="subcellular location">
    <subcellularLocation>
        <location>Plastid</location>
        <location>Chloroplast</location>
    </subcellularLocation>
</comment>
<comment type="similarity">
    <text evidence="1">Belongs to the bacterial ribosomal protein bL33 family.</text>
</comment>